<accession>O04266</accession>
<sequence>MFVIDWFYGVLASLGLWQKEAKILFLGLDNAGKTTLLHMLKDERLVQHQPTQHPTSEELSIGKIKFKAFDLGGHQIARRVWKDYYAKVDAVVYLVDAYDKERFAESKKELDALLSDESLATVPFLILGNKIDIPYAASEDELRYHLGLSNFTTGKGKVDLVGSNVRPLEVFMCSIVRKMGYGEGFKWLSQYIK</sequence>
<feature type="chain" id="PRO_0000206267" description="Small COPII coat GTPase SAR1A">
    <location>
        <begin position="1"/>
        <end position="193"/>
    </location>
</feature>
<feature type="region of interest" description="Mediates recruitment to ER membranes" evidence="2">
    <location>
        <begin position="10"/>
        <end position="14"/>
    </location>
</feature>
<feature type="short sequence motif" description="STAR; SAR1-N-terminal activation recruitment. Required for the activation and subsequent recruitment to ER membrane" evidence="2">
    <location>
        <begin position="2"/>
        <end position="4"/>
    </location>
</feature>
<feature type="binding site" evidence="1">
    <location>
        <position position="29"/>
    </location>
    <ligand>
        <name>Mg(2+)</name>
        <dbReference type="ChEBI" id="CHEBI:18420"/>
    </ligand>
</feature>
<feature type="binding site" evidence="1">
    <location>
        <position position="30"/>
    </location>
    <ligand>
        <name>GDP</name>
        <dbReference type="ChEBI" id="CHEBI:58189"/>
    </ligand>
</feature>
<feature type="binding site" evidence="3">
    <location>
        <position position="30"/>
    </location>
    <ligand>
        <name>GTP</name>
        <dbReference type="ChEBI" id="CHEBI:37565"/>
    </ligand>
</feature>
<feature type="binding site" evidence="1">
    <location>
        <position position="31"/>
    </location>
    <ligand>
        <name>GDP</name>
        <dbReference type="ChEBI" id="CHEBI:58189"/>
    </ligand>
</feature>
<feature type="binding site" evidence="1">
    <location>
        <position position="32"/>
    </location>
    <ligand>
        <name>GDP</name>
        <dbReference type="ChEBI" id="CHEBI:58189"/>
    </ligand>
</feature>
<feature type="binding site" evidence="3">
    <location>
        <position position="32"/>
    </location>
    <ligand>
        <name>GTP</name>
        <dbReference type="ChEBI" id="CHEBI:37565"/>
    </ligand>
</feature>
<feature type="binding site" evidence="1">
    <location>
        <position position="33"/>
    </location>
    <ligand>
        <name>GDP</name>
        <dbReference type="ChEBI" id="CHEBI:58189"/>
    </ligand>
</feature>
<feature type="binding site" evidence="3">
    <location>
        <position position="33"/>
    </location>
    <ligand>
        <name>GTP</name>
        <dbReference type="ChEBI" id="CHEBI:37565"/>
    </ligand>
</feature>
<feature type="binding site" evidence="1">
    <location>
        <position position="34"/>
    </location>
    <ligand>
        <name>GDP</name>
        <dbReference type="ChEBI" id="CHEBI:58189"/>
    </ligand>
</feature>
<feature type="binding site" evidence="3">
    <location>
        <position position="34"/>
    </location>
    <ligand>
        <name>GTP</name>
        <dbReference type="ChEBI" id="CHEBI:37565"/>
    </ligand>
</feature>
<feature type="binding site" evidence="1">
    <location>
        <position position="35"/>
    </location>
    <ligand>
        <name>GDP</name>
        <dbReference type="ChEBI" id="CHEBI:58189"/>
    </ligand>
</feature>
<feature type="binding site" evidence="3">
    <location>
        <position position="35"/>
    </location>
    <ligand>
        <name>GTP</name>
        <dbReference type="ChEBI" id="CHEBI:37565"/>
    </ligand>
</feature>
<feature type="binding site" evidence="1">
    <location>
        <position position="70"/>
    </location>
    <ligand>
        <name>Mg(2+)</name>
        <dbReference type="ChEBI" id="CHEBI:18420"/>
    </ligand>
</feature>
<feature type="binding site" evidence="1">
    <location>
        <position position="129"/>
    </location>
    <ligand>
        <name>GDP</name>
        <dbReference type="ChEBI" id="CHEBI:58189"/>
    </ligand>
</feature>
<feature type="binding site" evidence="3">
    <location>
        <position position="129"/>
    </location>
    <ligand>
        <name>GTP</name>
        <dbReference type="ChEBI" id="CHEBI:37565"/>
    </ligand>
</feature>
<feature type="binding site" evidence="1">
    <location>
        <position position="130"/>
    </location>
    <ligand>
        <name>GDP</name>
        <dbReference type="ChEBI" id="CHEBI:58189"/>
    </ligand>
</feature>
<feature type="binding site" evidence="3">
    <location>
        <position position="130"/>
    </location>
    <ligand>
        <name>GTP</name>
        <dbReference type="ChEBI" id="CHEBI:37565"/>
    </ligand>
</feature>
<feature type="binding site" evidence="1">
    <location>
        <position position="132"/>
    </location>
    <ligand>
        <name>GDP</name>
        <dbReference type="ChEBI" id="CHEBI:58189"/>
    </ligand>
</feature>
<feature type="binding site" evidence="3">
    <location>
        <position position="132"/>
    </location>
    <ligand>
        <name>GTP</name>
        <dbReference type="ChEBI" id="CHEBI:37565"/>
    </ligand>
</feature>
<feature type="binding site" evidence="1">
    <location>
        <position position="175"/>
    </location>
    <ligand>
        <name>GDP</name>
        <dbReference type="ChEBI" id="CHEBI:58189"/>
    </ligand>
</feature>
<feature type="binding site" evidence="3">
    <location>
        <position position="175"/>
    </location>
    <ligand>
        <name>GTP</name>
        <dbReference type="ChEBI" id="CHEBI:37565"/>
    </ligand>
</feature>
<comment type="function">
    <text evidence="1">Small GTPase that cycles between an active GTP-bound and an inactive GDP-bound state and mainly functions in vesicle-mediated endoplasmic reticulum (ER) to Golgi transport. The active GTP-bound form inserts into the endoplasmic reticulum membrane where it recruits the remainder of the coat protein complex II/COPII. The coat protein complex II assembling and polymerizing on endoplasmic reticulum membrane is responsible for both the sorting of cargos and the deformation and budding of membranes into vesicles destined to the Golgi.</text>
</comment>
<comment type="catalytic activity">
    <reaction evidence="1">
        <text>GTP + H2O = GDP + phosphate + H(+)</text>
        <dbReference type="Rhea" id="RHEA:19669"/>
        <dbReference type="ChEBI" id="CHEBI:15377"/>
        <dbReference type="ChEBI" id="CHEBI:15378"/>
        <dbReference type="ChEBI" id="CHEBI:37565"/>
        <dbReference type="ChEBI" id="CHEBI:43474"/>
        <dbReference type="ChEBI" id="CHEBI:58189"/>
        <dbReference type="EC" id="3.6.5.2"/>
    </reaction>
    <physiologicalReaction direction="left-to-right" evidence="1">
        <dbReference type="Rhea" id="RHEA:19670"/>
    </physiologicalReaction>
</comment>
<comment type="activity regulation">
    <text evidence="1">Small GTPases activation is mediated by guanine exchange factors (GEF), while inactivation through hydrolysis of the bound GTP is stimulated by GTPase activating proteins (GAP).</text>
</comment>
<comment type="subunit">
    <text evidence="1">Homodimer; upon association with membrane. Part of the coat protein complex II/COPII, composed of SEC23/24 and SEC13/31 heterodimers, that it helps recruit and assemble on endoplasmic reticulum (ER) membranes at ER exit sites.</text>
</comment>
<comment type="subcellular location">
    <subcellularLocation>
        <location evidence="1">Endoplasmic reticulum membrane</location>
        <topology evidence="1">Peripheral membrane protein</topology>
    </subcellularLocation>
    <subcellularLocation>
        <location evidence="1">Golgi apparatus</location>
        <location evidence="1">Golgi stack membrane</location>
        <topology evidence="1">Peripheral membrane protein</topology>
    </subcellularLocation>
    <subcellularLocation>
        <location evidence="1">Cytoplasm</location>
        <location evidence="1">Cytosol</location>
    </subcellularLocation>
    <text evidence="1">Active at endoplasmic reticulum exit sites (ERES) where it inserts into the membrane and recruits the remainder of the coat protein complex II/COPII.</text>
</comment>
<comment type="tissue specificity">
    <text>Expressed in most tissues.</text>
</comment>
<comment type="similarity">
    <text evidence="4">Belongs to the small GTPase superfamily. SAR1 family.</text>
</comment>
<gene>
    <name type="primary">SAR1A</name>
</gene>
<evidence type="ECO:0000250" key="1">
    <source>
        <dbReference type="UniProtKB" id="Q9NR31"/>
    </source>
</evidence>
<evidence type="ECO:0000250" key="2">
    <source>
        <dbReference type="UniProtKB" id="Q9QVY3"/>
    </source>
</evidence>
<evidence type="ECO:0000250" key="3">
    <source>
        <dbReference type="UniProtKB" id="Q9Y6B6"/>
    </source>
</evidence>
<evidence type="ECO:0000305" key="4"/>
<protein>
    <recommendedName>
        <fullName evidence="1">Small COPII coat GTPase SAR1A</fullName>
        <ecNumber evidence="1">3.6.5.2</ecNumber>
    </recommendedName>
</protein>
<proteinExistence type="evidence at transcript level"/>
<name>SAR1A_BRACM</name>
<dbReference type="EC" id="3.6.5.2" evidence="1"/>
<dbReference type="EMBL" id="U55035">
    <property type="protein sequence ID" value="AAC49716.1"/>
    <property type="molecule type" value="mRNA"/>
</dbReference>
<dbReference type="PIR" id="T52094">
    <property type="entry name" value="T52094"/>
</dbReference>
<dbReference type="SMR" id="O04266"/>
<dbReference type="Proteomes" id="UP000011750">
    <property type="component" value="Unplaced"/>
</dbReference>
<dbReference type="GO" id="GO:0030127">
    <property type="term" value="C:COPII vesicle coat"/>
    <property type="evidence" value="ECO:0000318"/>
    <property type="project" value="GO_Central"/>
</dbReference>
<dbReference type="GO" id="GO:0005829">
    <property type="term" value="C:cytosol"/>
    <property type="evidence" value="ECO:0007669"/>
    <property type="project" value="UniProtKB-SubCell"/>
</dbReference>
<dbReference type="GO" id="GO:0070971">
    <property type="term" value="C:endoplasmic reticulum exit site"/>
    <property type="evidence" value="ECO:0000318"/>
    <property type="project" value="GO_Central"/>
</dbReference>
<dbReference type="GO" id="GO:0005789">
    <property type="term" value="C:endoplasmic reticulum membrane"/>
    <property type="evidence" value="ECO:0007669"/>
    <property type="project" value="UniProtKB-SubCell"/>
</dbReference>
<dbReference type="GO" id="GO:0032580">
    <property type="term" value="C:Golgi cisterna membrane"/>
    <property type="evidence" value="ECO:0007669"/>
    <property type="project" value="UniProtKB-SubCell"/>
</dbReference>
<dbReference type="GO" id="GO:0005525">
    <property type="term" value="F:GTP binding"/>
    <property type="evidence" value="ECO:0007669"/>
    <property type="project" value="UniProtKB-KW"/>
</dbReference>
<dbReference type="GO" id="GO:0003924">
    <property type="term" value="F:GTPase activity"/>
    <property type="evidence" value="ECO:0000318"/>
    <property type="project" value="GO_Central"/>
</dbReference>
<dbReference type="GO" id="GO:0046872">
    <property type="term" value="F:metal ion binding"/>
    <property type="evidence" value="ECO:0007669"/>
    <property type="project" value="UniProtKB-KW"/>
</dbReference>
<dbReference type="GO" id="GO:0006888">
    <property type="term" value="P:endoplasmic reticulum to Golgi vesicle-mediated transport"/>
    <property type="evidence" value="ECO:0000318"/>
    <property type="project" value="GO_Central"/>
</dbReference>
<dbReference type="GO" id="GO:0006886">
    <property type="term" value="P:intracellular protein transport"/>
    <property type="evidence" value="ECO:0007669"/>
    <property type="project" value="InterPro"/>
</dbReference>
<dbReference type="GO" id="GO:0061024">
    <property type="term" value="P:membrane organization"/>
    <property type="evidence" value="ECO:0000318"/>
    <property type="project" value="GO_Central"/>
</dbReference>
<dbReference type="GO" id="GO:0003400">
    <property type="term" value="P:regulation of COPII vesicle coating"/>
    <property type="evidence" value="ECO:0000318"/>
    <property type="project" value="GO_Central"/>
</dbReference>
<dbReference type="GO" id="GO:0016050">
    <property type="term" value="P:vesicle organization"/>
    <property type="evidence" value="ECO:0000318"/>
    <property type="project" value="GO_Central"/>
</dbReference>
<dbReference type="CDD" id="cd00879">
    <property type="entry name" value="Sar1"/>
    <property type="match status" value="1"/>
</dbReference>
<dbReference type="FunFam" id="3.40.50.300:FF:000261">
    <property type="entry name" value="GTP-binding protein SAR1A"/>
    <property type="match status" value="1"/>
</dbReference>
<dbReference type="Gene3D" id="3.40.50.300">
    <property type="entry name" value="P-loop containing nucleotide triphosphate hydrolases"/>
    <property type="match status" value="1"/>
</dbReference>
<dbReference type="InterPro" id="IPR027417">
    <property type="entry name" value="P-loop_NTPase"/>
</dbReference>
<dbReference type="InterPro" id="IPR005225">
    <property type="entry name" value="Small_GTP-bd"/>
</dbReference>
<dbReference type="InterPro" id="IPR006689">
    <property type="entry name" value="Small_GTPase_ARF/SAR"/>
</dbReference>
<dbReference type="InterPro" id="IPR006687">
    <property type="entry name" value="Small_GTPase_SAR1"/>
</dbReference>
<dbReference type="NCBIfam" id="TIGR00231">
    <property type="entry name" value="small_GTP"/>
    <property type="match status" value="1"/>
</dbReference>
<dbReference type="PANTHER" id="PTHR45684">
    <property type="entry name" value="RE74312P"/>
    <property type="match status" value="1"/>
</dbReference>
<dbReference type="Pfam" id="PF00025">
    <property type="entry name" value="Arf"/>
    <property type="match status" value="1"/>
</dbReference>
<dbReference type="PRINTS" id="PR00328">
    <property type="entry name" value="SAR1GTPBP"/>
</dbReference>
<dbReference type="SMART" id="SM00177">
    <property type="entry name" value="ARF"/>
    <property type="match status" value="1"/>
</dbReference>
<dbReference type="SMART" id="SM00178">
    <property type="entry name" value="SAR"/>
    <property type="match status" value="1"/>
</dbReference>
<dbReference type="SUPFAM" id="SSF52540">
    <property type="entry name" value="P-loop containing nucleoside triphosphate hydrolases"/>
    <property type="match status" value="1"/>
</dbReference>
<dbReference type="PROSITE" id="PS51422">
    <property type="entry name" value="SAR1"/>
    <property type="match status" value="1"/>
</dbReference>
<reference key="1">
    <citation type="journal article" date="1997" name="Plant Mol. Biol.">
        <title>The presence of a Sar1 gene family in Brassica campestris that suppresses a yeast vesicular transport mutation Sec12-1.</title>
        <authorList>
            <person name="Kim W.Y."/>
            <person name="Cheong N.E."/>
            <person name="Je D.Y."/>
            <person name="Kim M.G."/>
            <person name="Lim C.O."/>
            <person name="Bahk J.D."/>
            <person name="Cho M.J."/>
            <person name="Lee S.Y."/>
        </authorList>
    </citation>
    <scope>NUCLEOTIDE SEQUENCE [MRNA]</scope>
</reference>
<keyword id="KW-0963">Cytoplasm</keyword>
<keyword id="KW-0256">Endoplasmic reticulum</keyword>
<keyword id="KW-0931">ER-Golgi transport</keyword>
<keyword id="KW-0333">Golgi apparatus</keyword>
<keyword id="KW-0342">GTP-binding</keyword>
<keyword id="KW-0378">Hydrolase</keyword>
<keyword id="KW-0460">Magnesium</keyword>
<keyword id="KW-0472">Membrane</keyword>
<keyword id="KW-0479">Metal-binding</keyword>
<keyword id="KW-0547">Nucleotide-binding</keyword>
<keyword id="KW-0653">Protein transport</keyword>
<keyword id="KW-1185">Reference proteome</keyword>
<keyword id="KW-0813">Transport</keyword>
<organism>
    <name type="scientific">Brassica campestris</name>
    <name type="common">Field mustard</name>
    <dbReference type="NCBI Taxonomy" id="3711"/>
    <lineage>
        <taxon>Eukaryota</taxon>
        <taxon>Viridiplantae</taxon>
        <taxon>Streptophyta</taxon>
        <taxon>Embryophyta</taxon>
        <taxon>Tracheophyta</taxon>
        <taxon>Spermatophyta</taxon>
        <taxon>Magnoliopsida</taxon>
        <taxon>eudicotyledons</taxon>
        <taxon>Gunneridae</taxon>
        <taxon>Pentapetalae</taxon>
        <taxon>rosids</taxon>
        <taxon>malvids</taxon>
        <taxon>Brassicales</taxon>
        <taxon>Brassicaceae</taxon>
        <taxon>Brassiceae</taxon>
        <taxon>Brassica</taxon>
    </lineage>
</organism>